<reference key="1">
    <citation type="journal article" date="1998" name="Biochim. Biophys. Acta">
        <title>Six isoforms of cardiotoxin in malayan spitting cobra (Naja naja sputatrix) venom: cloning and characterization of cDNAs.</title>
        <authorList>
            <person name="Jeyaseelan K."/>
            <person name="Armugam A."/>
            <person name="Lachumanan R."/>
            <person name="Tan C.H."/>
            <person name="Tan N.H."/>
        </authorList>
    </citation>
    <scope>NUCLEOTIDE SEQUENCE [MRNA]</scope>
    <scope>PROTEIN SEQUENCE OF 22-71</scope>
    <scope>SUBCELLULAR LOCATION</scope>
    <source>
        <tissue>Venom</tissue>
        <tissue>Venom gland</tissue>
    </source>
</reference>
<reference key="2">
    <citation type="journal article" date="1998" name="FEBS Lett.">
        <title>Structure and organization of the cardiotoxin genes in Naja naja sputatrix.</title>
        <authorList>
            <person name="Lachumanan R."/>
            <person name="Armugam A."/>
            <person name="Tan C.H."/>
            <person name="Jeyaseelan K."/>
        </authorList>
    </citation>
    <scope>NUCLEOTIDE SEQUENCE [GENOMIC DNA] OF 20-81</scope>
    <source>
        <tissue>Liver</tissue>
    </source>
</reference>
<proteinExistence type="evidence at protein level"/>
<accession>O73857</accession>
<keyword id="KW-0123">Cardiotoxin</keyword>
<keyword id="KW-0204">Cytolysis</keyword>
<keyword id="KW-0903">Direct protein sequencing</keyword>
<keyword id="KW-1015">Disulfide bond</keyword>
<keyword id="KW-0472">Membrane</keyword>
<keyword id="KW-0964">Secreted</keyword>
<keyword id="KW-0732">Signal</keyword>
<keyword id="KW-1052">Target cell membrane</keyword>
<keyword id="KW-1053">Target membrane</keyword>
<keyword id="KW-0800">Toxin</keyword>
<name>3SA5A_NAJSP</name>
<protein>
    <recommendedName>
        <fullName>Cytotoxin 5a</fullName>
    </recommendedName>
    <alternativeName>
        <fullName>Cardiotoxin 5a</fullName>
        <shortName>CTX-5a</shortName>
        <shortName>Ctx5a</shortName>
    </alternativeName>
</protein>
<comment type="function">
    <text evidence="1 2">Shows cytolytic activity on many different cells by forming pore in lipid membranes. In vivo, increases heart rate or kills the animal by cardiac arrest. In addition, it binds to heparin with high affinity, interacts with Kv channel-interacting protein 1 (KCNIP1) in a calcium-independent manner, and binds to integrin alpha-V/beta-3 (ITGAV/ITGB3) with moderate affinity.</text>
</comment>
<comment type="subunit">
    <text evidence="1">Monomer in solution; Homodimer and oligomer in the presence of negatively charged lipids forming a pore with a size ranging between 20 and 30 Angstroms.</text>
</comment>
<comment type="subcellular location">
    <subcellularLocation>
        <location evidence="3">Secreted</location>
    </subcellularLocation>
    <subcellularLocation>
        <location evidence="1">Target cell membrane</location>
    </subcellularLocation>
</comment>
<comment type="tissue specificity">
    <text evidence="4">Expressed by the venom gland.</text>
</comment>
<comment type="miscellaneous">
    <text evidence="4">Is classified as a S-type cytotoxin, since a serine residue stands at position 49 (Ser-29 in standard classification).</text>
</comment>
<comment type="similarity">
    <text evidence="4">Belongs to the three-finger toxin family. Short-chain subfamily. Type IA cytotoxin sub-subfamily.</text>
</comment>
<feature type="signal peptide" evidence="3">
    <location>
        <begin position="1"/>
        <end position="21"/>
    </location>
</feature>
<feature type="chain" id="PRO_0000035400" description="Cytotoxin 5a" evidence="5">
    <location>
        <begin position="22"/>
        <end position="81"/>
    </location>
</feature>
<feature type="disulfide bond" evidence="1">
    <location>
        <begin position="24"/>
        <end position="42"/>
    </location>
</feature>
<feature type="disulfide bond" evidence="1">
    <location>
        <begin position="35"/>
        <end position="59"/>
    </location>
</feature>
<feature type="disulfide bond" evidence="1">
    <location>
        <begin position="63"/>
        <end position="74"/>
    </location>
</feature>
<feature type="disulfide bond" evidence="1">
    <location>
        <begin position="75"/>
        <end position="80"/>
    </location>
</feature>
<sequence>MKTLLLTLVVVTIVCLDLGYTLKCNKLVPLFYKTCPAGKNLCYKMFMVSNLTVPVKRGCIDVCPKNSALVKYVCCNTDRCN</sequence>
<organism>
    <name type="scientific">Naja sputatrix</name>
    <name type="common">Malayan spitting cobra</name>
    <name type="synonym">Naja naja sputatrix</name>
    <dbReference type="NCBI Taxonomy" id="33626"/>
    <lineage>
        <taxon>Eukaryota</taxon>
        <taxon>Metazoa</taxon>
        <taxon>Chordata</taxon>
        <taxon>Craniata</taxon>
        <taxon>Vertebrata</taxon>
        <taxon>Euteleostomi</taxon>
        <taxon>Lepidosauria</taxon>
        <taxon>Squamata</taxon>
        <taxon>Bifurcata</taxon>
        <taxon>Unidentata</taxon>
        <taxon>Episquamata</taxon>
        <taxon>Toxicofera</taxon>
        <taxon>Serpentes</taxon>
        <taxon>Colubroidea</taxon>
        <taxon>Elapidae</taxon>
        <taxon>Elapinae</taxon>
        <taxon>Naja</taxon>
    </lineage>
</organism>
<dbReference type="EMBL" id="U86596">
    <property type="protein sequence ID" value="AAC27691.1"/>
    <property type="molecule type" value="mRNA"/>
</dbReference>
<dbReference type="EMBL" id="AF064099">
    <property type="protein sequence ID" value="AAC61317.1"/>
    <property type="molecule type" value="Genomic_DNA"/>
</dbReference>
<dbReference type="SMR" id="O73857"/>
<dbReference type="GO" id="GO:0005576">
    <property type="term" value="C:extracellular region"/>
    <property type="evidence" value="ECO:0007669"/>
    <property type="project" value="UniProtKB-SubCell"/>
</dbReference>
<dbReference type="GO" id="GO:0016020">
    <property type="term" value="C:membrane"/>
    <property type="evidence" value="ECO:0007669"/>
    <property type="project" value="UniProtKB-KW"/>
</dbReference>
<dbReference type="GO" id="GO:0044218">
    <property type="term" value="C:other organism cell membrane"/>
    <property type="evidence" value="ECO:0007669"/>
    <property type="project" value="UniProtKB-KW"/>
</dbReference>
<dbReference type="GO" id="GO:0090729">
    <property type="term" value="F:toxin activity"/>
    <property type="evidence" value="ECO:0007669"/>
    <property type="project" value="UniProtKB-KW"/>
</dbReference>
<dbReference type="GO" id="GO:0031640">
    <property type="term" value="P:killing of cells of another organism"/>
    <property type="evidence" value="ECO:0007669"/>
    <property type="project" value="UniProtKB-KW"/>
</dbReference>
<dbReference type="CDD" id="cd00206">
    <property type="entry name" value="TFP_snake_toxin"/>
    <property type="match status" value="1"/>
</dbReference>
<dbReference type="FunFam" id="2.10.60.10:FF:000024">
    <property type="entry name" value="Cytotoxin 1"/>
    <property type="match status" value="1"/>
</dbReference>
<dbReference type="Gene3D" id="2.10.60.10">
    <property type="entry name" value="CD59"/>
    <property type="match status" value="1"/>
</dbReference>
<dbReference type="InterPro" id="IPR003572">
    <property type="entry name" value="Cytotoxin_Cobra"/>
</dbReference>
<dbReference type="InterPro" id="IPR003571">
    <property type="entry name" value="Snake_3FTx"/>
</dbReference>
<dbReference type="InterPro" id="IPR045860">
    <property type="entry name" value="Snake_toxin-like_sf"/>
</dbReference>
<dbReference type="InterPro" id="IPR018354">
    <property type="entry name" value="Snake_toxin_con_site"/>
</dbReference>
<dbReference type="InterPro" id="IPR054131">
    <property type="entry name" value="Toxin_cobra-type"/>
</dbReference>
<dbReference type="Pfam" id="PF21947">
    <property type="entry name" value="Toxin_cobra-type"/>
    <property type="match status" value="1"/>
</dbReference>
<dbReference type="PRINTS" id="PR00282">
    <property type="entry name" value="CYTOTOXIN"/>
</dbReference>
<dbReference type="SUPFAM" id="SSF57302">
    <property type="entry name" value="Snake toxin-like"/>
    <property type="match status" value="1"/>
</dbReference>
<dbReference type="PROSITE" id="PS00272">
    <property type="entry name" value="SNAKE_TOXIN"/>
    <property type="match status" value="1"/>
</dbReference>
<evidence type="ECO:0000250" key="1">
    <source>
        <dbReference type="UniProtKB" id="P60301"/>
    </source>
</evidence>
<evidence type="ECO:0000250" key="2">
    <source>
        <dbReference type="UniProtKB" id="P60304"/>
    </source>
</evidence>
<evidence type="ECO:0000269" key="3">
    <source>
    </source>
</evidence>
<evidence type="ECO:0000305" key="4"/>
<evidence type="ECO:0000305" key="5">
    <source>
    </source>
</evidence>